<comment type="function">
    <text evidence="1">Catalyzes the ATP-dependent amination of UTP to CTP with either L-glutamine or ammonia as the source of nitrogen. Regulates intracellular CTP levels through interactions with the four ribonucleotide triphosphates.</text>
</comment>
<comment type="catalytic activity">
    <reaction evidence="1">
        <text>UTP + L-glutamine + ATP + H2O = CTP + L-glutamate + ADP + phosphate + 2 H(+)</text>
        <dbReference type="Rhea" id="RHEA:26426"/>
        <dbReference type="ChEBI" id="CHEBI:15377"/>
        <dbReference type="ChEBI" id="CHEBI:15378"/>
        <dbReference type="ChEBI" id="CHEBI:29985"/>
        <dbReference type="ChEBI" id="CHEBI:30616"/>
        <dbReference type="ChEBI" id="CHEBI:37563"/>
        <dbReference type="ChEBI" id="CHEBI:43474"/>
        <dbReference type="ChEBI" id="CHEBI:46398"/>
        <dbReference type="ChEBI" id="CHEBI:58359"/>
        <dbReference type="ChEBI" id="CHEBI:456216"/>
        <dbReference type="EC" id="6.3.4.2"/>
    </reaction>
</comment>
<comment type="catalytic activity">
    <reaction evidence="1">
        <text>L-glutamine + H2O = L-glutamate + NH4(+)</text>
        <dbReference type="Rhea" id="RHEA:15889"/>
        <dbReference type="ChEBI" id="CHEBI:15377"/>
        <dbReference type="ChEBI" id="CHEBI:28938"/>
        <dbReference type="ChEBI" id="CHEBI:29985"/>
        <dbReference type="ChEBI" id="CHEBI:58359"/>
    </reaction>
</comment>
<comment type="catalytic activity">
    <reaction evidence="1">
        <text>UTP + NH4(+) + ATP = CTP + ADP + phosphate + 2 H(+)</text>
        <dbReference type="Rhea" id="RHEA:16597"/>
        <dbReference type="ChEBI" id="CHEBI:15378"/>
        <dbReference type="ChEBI" id="CHEBI:28938"/>
        <dbReference type="ChEBI" id="CHEBI:30616"/>
        <dbReference type="ChEBI" id="CHEBI:37563"/>
        <dbReference type="ChEBI" id="CHEBI:43474"/>
        <dbReference type="ChEBI" id="CHEBI:46398"/>
        <dbReference type="ChEBI" id="CHEBI:456216"/>
    </reaction>
</comment>
<comment type="activity regulation">
    <text evidence="1">Allosterically activated by GTP, when glutamine is the substrate; GTP has no effect on the reaction when ammonia is the substrate. The allosteric effector GTP functions by stabilizing the protein conformation that binds the tetrahedral intermediate(s) formed during glutamine hydrolysis. Inhibited by the product CTP, via allosteric rather than competitive inhibition.</text>
</comment>
<comment type="pathway">
    <text evidence="1">Pyrimidine metabolism; CTP biosynthesis via de novo pathway; CTP from UDP: step 2/2.</text>
</comment>
<comment type="subunit">
    <text evidence="1">Homotetramer.</text>
</comment>
<comment type="miscellaneous">
    <text evidence="1">CTPSs have evolved a hybrid strategy for distinguishing between UTP and CTP. The overlapping regions of the product feedback inhibitory and substrate sites recognize a common feature in both compounds, the triphosphate moiety. To differentiate isosteric substrate and product pyrimidine rings, an additional pocket far from the expected kinase/ligase catalytic site, specifically recognizes the cytosine and ribose portions of the product inhibitor.</text>
</comment>
<comment type="similarity">
    <text evidence="1">Belongs to the CTP synthase family.</text>
</comment>
<feature type="chain" id="PRO_0000138212" description="CTP synthase">
    <location>
        <begin position="1"/>
        <end position="543"/>
    </location>
</feature>
<feature type="domain" description="Glutamine amidotransferase type-1" evidence="1">
    <location>
        <begin position="290"/>
        <end position="541"/>
    </location>
</feature>
<feature type="region of interest" description="Amidoligase domain" evidence="1">
    <location>
        <begin position="1"/>
        <end position="265"/>
    </location>
</feature>
<feature type="active site" description="Nucleophile; for glutamine hydrolysis" evidence="1">
    <location>
        <position position="378"/>
    </location>
</feature>
<feature type="active site" evidence="1">
    <location>
        <position position="514"/>
    </location>
</feature>
<feature type="active site" evidence="1">
    <location>
        <position position="516"/>
    </location>
</feature>
<feature type="binding site" evidence="1">
    <location>
        <position position="13"/>
    </location>
    <ligand>
        <name>CTP</name>
        <dbReference type="ChEBI" id="CHEBI:37563"/>
        <note>allosteric inhibitor</note>
    </ligand>
</feature>
<feature type="binding site" evidence="1">
    <location>
        <position position="13"/>
    </location>
    <ligand>
        <name>UTP</name>
        <dbReference type="ChEBI" id="CHEBI:46398"/>
    </ligand>
</feature>
<feature type="binding site" evidence="1">
    <location>
        <begin position="14"/>
        <end position="19"/>
    </location>
    <ligand>
        <name>ATP</name>
        <dbReference type="ChEBI" id="CHEBI:30616"/>
    </ligand>
</feature>
<feature type="binding site" evidence="1">
    <location>
        <position position="71"/>
    </location>
    <ligand>
        <name>ATP</name>
        <dbReference type="ChEBI" id="CHEBI:30616"/>
    </ligand>
</feature>
<feature type="binding site" evidence="1">
    <location>
        <position position="71"/>
    </location>
    <ligand>
        <name>Mg(2+)</name>
        <dbReference type="ChEBI" id="CHEBI:18420"/>
    </ligand>
</feature>
<feature type="binding site" evidence="1">
    <location>
        <position position="139"/>
    </location>
    <ligand>
        <name>Mg(2+)</name>
        <dbReference type="ChEBI" id="CHEBI:18420"/>
    </ligand>
</feature>
<feature type="binding site" evidence="1">
    <location>
        <begin position="146"/>
        <end position="148"/>
    </location>
    <ligand>
        <name>CTP</name>
        <dbReference type="ChEBI" id="CHEBI:37563"/>
        <note>allosteric inhibitor</note>
    </ligand>
</feature>
<feature type="binding site" evidence="1">
    <location>
        <begin position="186"/>
        <end position="191"/>
    </location>
    <ligand>
        <name>CTP</name>
        <dbReference type="ChEBI" id="CHEBI:37563"/>
        <note>allosteric inhibitor</note>
    </ligand>
</feature>
<feature type="binding site" evidence="1">
    <location>
        <begin position="186"/>
        <end position="191"/>
    </location>
    <ligand>
        <name>UTP</name>
        <dbReference type="ChEBI" id="CHEBI:46398"/>
    </ligand>
</feature>
<feature type="binding site" evidence="1">
    <location>
        <position position="222"/>
    </location>
    <ligand>
        <name>CTP</name>
        <dbReference type="ChEBI" id="CHEBI:37563"/>
        <note>allosteric inhibitor</note>
    </ligand>
</feature>
<feature type="binding site" evidence="1">
    <location>
        <position position="222"/>
    </location>
    <ligand>
        <name>UTP</name>
        <dbReference type="ChEBI" id="CHEBI:46398"/>
    </ligand>
</feature>
<feature type="binding site" evidence="1">
    <location>
        <position position="351"/>
    </location>
    <ligand>
        <name>L-glutamine</name>
        <dbReference type="ChEBI" id="CHEBI:58359"/>
    </ligand>
</feature>
<feature type="binding site" evidence="1">
    <location>
        <begin position="379"/>
        <end position="382"/>
    </location>
    <ligand>
        <name>L-glutamine</name>
        <dbReference type="ChEBI" id="CHEBI:58359"/>
    </ligand>
</feature>
<feature type="binding site" evidence="1">
    <location>
        <position position="402"/>
    </location>
    <ligand>
        <name>L-glutamine</name>
        <dbReference type="ChEBI" id="CHEBI:58359"/>
    </ligand>
</feature>
<feature type="binding site" evidence="1">
    <location>
        <position position="469"/>
    </location>
    <ligand>
        <name>L-glutamine</name>
        <dbReference type="ChEBI" id="CHEBI:58359"/>
    </ligand>
</feature>
<organism>
    <name type="scientific">Pseudomonas syringae pv. tomato (strain ATCC BAA-871 / DC3000)</name>
    <dbReference type="NCBI Taxonomy" id="223283"/>
    <lineage>
        <taxon>Bacteria</taxon>
        <taxon>Pseudomonadati</taxon>
        <taxon>Pseudomonadota</taxon>
        <taxon>Gammaproteobacteria</taxon>
        <taxon>Pseudomonadales</taxon>
        <taxon>Pseudomonadaceae</taxon>
        <taxon>Pseudomonas</taxon>
    </lineage>
</organism>
<protein>
    <recommendedName>
        <fullName evidence="1">CTP synthase</fullName>
        <ecNumber evidence="1">6.3.4.2</ecNumber>
    </recommendedName>
    <alternativeName>
        <fullName evidence="1">Cytidine 5'-triphosphate synthase</fullName>
    </alternativeName>
    <alternativeName>
        <fullName evidence="1">Cytidine triphosphate synthetase</fullName>
        <shortName evidence="1">CTP synthetase</shortName>
        <shortName evidence="1">CTPS</shortName>
    </alternativeName>
    <alternativeName>
        <fullName evidence="1">UTP--ammonia ligase</fullName>
    </alternativeName>
</protein>
<dbReference type="EC" id="6.3.4.2" evidence="1"/>
<dbReference type="EMBL" id="AE016853">
    <property type="protein sequence ID" value="AAO55072.1"/>
    <property type="molecule type" value="Genomic_DNA"/>
</dbReference>
<dbReference type="RefSeq" id="NP_791377.1">
    <property type="nucleotide sequence ID" value="NC_004578.1"/>
</dbReference>
<dbReference type="RefSeq" id="WP_003377829.1">
    <property type="nucleotide sequence ID" value="NC_004578.1"/>
</dbReference>
<dbReference type="SMR" id="Q886M5"/>
<dbReference type="STRING" id="223283.PSPTO_1552"/>
<dbReference type="KEGG" id="pst:PSPTO_1552"/>
<dbReference type="PATRIC" id="fig|223283.9.peg.1578"/>
<dbReference type="eggNOG" id="COG0504">
    <property type="taxonomic scope" value="Bacteria"/>
</dbReference>
<dbReference type="HOGENOM" id="CLU_011675_5_0_6"/>
<dbReference type="OrthoDB" id="9801107at2"/>
<dbReference type="PhylomeDB" id="Q886M5"/>
<dbReference type="UniPathway" id="UPA00159">
    <property type="reaction ID" value="UER00277"/>
</dbReference>
<dbReference type="Proteomes" id="UP000002515">
    <property type="component" value="Chromosome"/>
</dbReference>
<dbReference type="GO" id="GO:0005829">
    <property type="term" value="C:cytosol"/>
    <property type="evidence" value="ECO:0007669"/>
    <property type="project" value="TreeGrafter"/>
</dbReference>
<dbReference type="GO" id="GO:0005524">
    <property type="term" value="F:ATP binding"/>
    <property type="evidence" value="ECO:0007669"/>
    <property type="project" value="UniProtKB-KW"/>
</dbReference>
<dbReference type="GO" id="GO:0003883">
    <property type="term" value="F:CTP synthase activity"/>
    <property type="evidence" value="ECO:0007669"/>
    <property type="project" value="UniProtKB-UniRule"/>
</dbReference>
<dbReference type="GO" id="GO:0004359">
    <property type="term" value="F:glutaminase activity"/>
    <property type="evidence" value="ECO:0007669"/>
    <property type="project" value="RHEA"/>
</dbReference>
<dbReference type="GO" id="GO:0042802">
    <property type="term" value="F:identical protein binding"/>
    <property type="evidence" value="ECO:0007669"/>
    <property type="project" value="TreeGrafter"/>
</dbReference>
<dbReference type="GO" id="GO:0046872">
    <property type="term" value="F:metal ion binding"/>
    <property type="evidence" value="ECO:0007669"/>
    <property type="project" value="UniProtKB-KW"/>
</dbReference>
<dbReference type="GO" id="GO:0044210">
    <property type="term" value="P:'de novo' CTP biosynthetic process"/>
    <property type="evidence" value="ECO:0007669"/>
    <property type="project" value="UniProtKB-UniRule"/>
</dbReference>
<dbReference type="GO" id="GO:0019856">
    <property type="term" value="P:pyrimidine nucleobase biosynthetic process"/>
    <property type="evidence" value="ECO:0007669"/>
    <property type="project" value="TreeGrafter"/>
</dbReference>
<dbReference type="CDD" id="cd03113">
    <property type="entry name" value="CTPS_N"/>
    <property type="match status" value="1"/>
</dbReference>
<dbReference type="CDD" id="cd01746">
    <property type="entry name" value="GATase1_CTP_Synthase"/>
    <property type="match status" value="1"/>
</dbReference>
<dbReference type="FunFam" id="3.40.50.300:FF:000009">
    <property type="entry name" value="CTP synthase"/>
    <property type="match status" value="1"/>
</dbReference>
<dbReference type="FunFam" id="3.40.50.880:FF:000002">
    <property type="entry name" value="CTP synthase"/>
    <property type="match status" value="1"/>
</dbReference>
<dbReference type="Gene3D" id="3.40.50.880">
    <property type="match status" value="1"/>
</dbReference>
<dbReference type="Gene3D" id="3.40.50.300">
    <property type="entry name" value="P-loop containing nucleotide triphosphate hydrolases"/>
    <property type="match status" value="1"/>
</dbReference>
<dbReference type="HAMAP" id="MF_01227">
    <property type="entry name" value="PyrG"/>
    <property type="match status" value="1"/>
</dbReference>
<dbReference type="InterPro" id="IPR029062">
    <property type="entry name" value="Class_I_gatase-like"/>
</dbReference>
<dbReference type="InterPro" id="IPR004468">
    <property type="entry name" value="CTP_synthase"/>
</dbReference>
<dbReference type="InterPro" id="IPR017456">
    <property type="entry name" value="CTP_synthase_N"/>
</dbReference>
<dbReference type="InterPro" id="IPR017926">
    <property type="entry name" value="GATASE"/>
</dbReference>
<dbReference type="InterPro" id="IPR033828">
    <property type="entry name" value="GATase1_CTP_Synthase"/>
</dbReference>
<dbReference type="InterPro" id="IPR027417">
    <property type="entry name" value="P-loop_NTPase"/>
</dbReference>
<dbReference type="NCBIfam" id="NF003792">
    <property type="entry name" value="PRK05380.1"/>
    <property type="match status" value="1"/>
</dbReference>
<dbReference type="NCBIfam" id="TIGR00337">
    <property type="entry name" value="PyrG"/>
    <property type="match status" value="1"/>
</dbReference>
<dbReference type="PANTHER" id="PTHR11550">
    <property type="entry name" value="CTP SYNTHASE"/>
    <property type="match status" value="1"/>
</dbReference>
<dbReference type="PANTHER" id="PTHR11550:SF0">
    <property type="entry name" value="CTP SYNTHASE-RELATED"/>
    <property type="match status" value="1"/>
</dbReference>
<dbReference type="Pfam" id="PF06418">
    <property type="entry name" value="CTP_synth_N"/>
    <property type="match status" value="1"/>
</dbReference>
<dbReference type="Pfam" id="PF00117">
    <property type="entry name" value="GATase"/>
    <property type="match status" value="1"/>
</dbReference>
<dbReference type="SUPFAM" id="SSF52317">
    <property type="entry name" value="Class I glutamine amidotransferase-like"/>
    <property type="match status" value="1"/>
</dbReference>
<dbReference type="SUPFAM" id="SSF52540">
    <property type="entry name" value="P-loop containing nucleoside triphosphate hydrolases"/>
    <property type="match status" value="1"/>
</dbReference>
<dbReference type="PROSITE" id="PS51273">
    <property type="entry name" value="GATASE_TYPE_1"/>
    <property type="match status" value="1"/>
</dbReference>
<proteinExistence type="inferred from homology"/>
<evidence type="ECO:0000255" key="1">
    <source>
        <dbReference type="HAMAP-Rule" id="MF_01227"/>
    </source>
</evidence>
<accession>Q886M5</accession>
<keyword id="KW-0067">ATP-binding</keyword>
<keyword id="KW-0315">Glutamine amidotransferase</keyword>
<keyword id="KW-0436">Ligase</keyword>
<keyword id="KW-0460">Magnesium</keyword>
<keyword id="KW-0479">Metal-binding</keyword>
<keyword id="KW-0547">Nucleotide-binding</keyword>
<keyword id="KW-0665">Pyrimidine biosynthesis</keyword>
<keyword id="KW-1185">Reference proteome</keyword>
<reference key="1">
    <citation type="journal article" date="2003" name="Proc. Natl. Acad. Sci. U.S.A.">
        <title>The complete genome sequence of the Arabidopsis and tomato pathogen Pseudomonas syringae pv. tomato DC3000.</title>
        <authorList>
            <person name="Buell C.R."/>
            <person name="Joardar V."/>
            <person name="Lindeberg M."/>
            <person name="Selengut J."/>
            <person name="Paulsen I.T."/>
            <person name="Gwinn M.L."/>
            <person name="Dodson R.J."/>
            <person name="DeBoy R.T."/>
            <person name="Durkin A.S."/>
            <person name="Kolonay J.F."/>
            <person name="Madupu R."/>
            <person name="Daugherty S.C."/>
            <person name="Brinkac L.M."/>
            <person name="Beanan M.J."/>
            <person name="Haft D.H."/>
            <person name="Nelson W.C."/>
            <person name="Davidsen T.M."/>
            <person name="Zafar N."/>
            <person name="Zhou L."/>
            <person name="Liu J."/>
            <person name="Yuan Q."/>
            <person name="Khouri H.M."/>
            <person name="Fedorova N.B."/>
            <person name="Tran B."/>
            <person name="Russell D."/>
            <person name="Berry K.J."/>
            <person name="Utterback T.R."/>
            <person name="Van Aken S.E."/>
            <person name="Feldblyum T.V."/>
            <person name="D'Ascenzo M."/>
            <person name="Deng W.-L."/>
            <person name="Ramos A.R."/>
            <person name="Alfano J.R."/>
            <person name="Cartinhour S."/>
            <person name="Chatterjee A.K."/>
            <person name="Delaney T.P."/>
            <person name="Lazarowitz S.G."/>
            <person name="Martin G.B."/>
            <person name="Schneider D.J."/>
            <person name="Tang X."/>
            <person name="Bender C.L."/>
            <person name="White O."/>
            <person name="Fraser C.M."/>
            <person name="Collmer A."/>
        </authorList>
    </citation>
    <scope>NUCLEOTIDE SEQUENCE [LARGE SCALE GENOMIC DNA]</scope>
    <source>
        <strain>ATCC BAA-871 / DC3000</strain>
    </source>
</reference>
<gene>
    <name evidence="1" type="primary">pyrG</name>
    <name type="ordered locus">PSPTO_1552</name>
</gene>
<sequence>MTRYIFVTGGVVSSLGKGIASASLAAILEARGLKVTMLKLDPYINVDPGTMSPFQHGEVFVTHDGAETDLDLGHYERFIRTTMTQNNNFTTGRVYEHVLRKERRGDYLGATIQVIPHITDEIKRRIIKGAGDADVALVEIGGTVGDIESQPFLEAIRQLRFEVGARRAMLMHLTLVPYIATAGETKTKPTQHSVKELRSIGLQPDVLVCRSDHPIDISSRRKIAQFTNVEERAVIALEDADTIYKIPGILHSQGLDDFVVERFGLQCGGADLSEWDKVVDAKLNPEHEVTIAMVGKYMELLDAYKSLIEAMSHAGITNRTKVNLRYIDSEDIENQGTGLLEGVDAILVPGGFGLRGVEGKITAVQFARENKVPYLGICLGMQVAVIEFARNVLGWKDANSTEFDRTSAHAVVGLITEWEDATGAVETRTESSDLGGTMRLGAQDCQLEAGSLVHDCYRKDVIVERHRHRYEVNNNLLPQLIEAGLKISGRSGDGALVEVVEAPDHPWFVACQFHPEFTSTPRDGHPLFSGFVKAALAQHQKNS</sequence>
<name>PYRG_PSESM</name>